<evidence type="ECO:0000250" key="1">
    <source>
        <dbReference type="UniProtKB" id="Q7K237"/>
    </source>
</evidence>
<evidence type="ECO:0000250" key="2">
    <source>
        <dbReference type="UniProtKB" id="Q9JJ06"/>
    </source>
</evidence>
<evidence type="ECO:0000250" key="3">
    <source>
        <dbReference type="UniProtKB" id="Q9NS00"/>
    </source>
</evidence>
<evidence type="ECO:0000255" key="4"/>
<evidence type="ECO:0000256" key="5">
    <source>
        <dbReference type="SAM" id="MobiDB-lite"/>
    </source>
</evidence>
<evidence type="ECO:0000269" key="6">
    <source>
    </source>
</evidence>
<evidence type="ECO:0000305" key="7"/>
<sequence length="363" mass="42311">MASKSWLNFLTFLCGSAIGFFLCSQLLNILLQEQADVQPNMLHNDPHARHSDDSGHNHLKGQMDFNADSSQHKDENTDVAENLYQKVKVLCWVMTSPQNLEKKAKHVKATWAQRCNKVLFMSSEENKDFPTVGLETKEGREQLYWKTIKAFQYVHDHYLEDADWFMKADDDTYVILDNLRWLLSKYNPEQPIYFGRRFKPYVKQGYMSGGAGYVLSKEALRRFVDAFKTEKCTHSSSIEDLALGRCMEIIKVEAGDSRDPTGKETFHPFVPEHHLIKGYLPKTFWYWNYNYYPPVEGPGCCSDIAVSFHYVDSTTMYELEYLVYHLRPYGYLYRYQPALPENILKEINQVNKKEDTKIKLGNP</sequence>
<gene>
    <name type="primary">C1galt1</name>
</gene>
<dbReference type="EC" id="2.4.1.122" evidence="3"/>
<dbReference type="EMBL" id="AF157963">
    <property type="protein sequence ID" value="AAF81983.1"/>
    <property type="molecule type" value="mRNA"/>
</dbReference>
<dbReference type="RefSeq" id="NP_075239.1">
    <property type="nucleotide sequence ID" value="NM_022950.3"/>
</dbReference>
<dbReference type="SMR" id="Q9JJ05"/>
<dbReference type="FunCoup" id="Q9JJ05">
    <property type="interactions" value="692"/>
</dbReference>
<dbReference type="STRING" id="10116.ENSRNOP00000069975"/>
<dbReference type="CAZy" id="GT31">
    <property type="family name" value="Glycosyltransferase Family 31"/>
</dbReference>
<dbReference type="PhosphoSitePlus" id="Q9JJ05"/>
<dbReference type="PaxDb" id="10116-ENSRNOP00000010375"/>
<dbReference type="GeneID" id="65044"/>
<dbReference type="KEGG" id="rno:65044"/>
<dbReference type="UCSC" id="RGD:621105">
    <property type="organism name" value="rat"/>
</dbReference>
<dbReference type="AGR" id="RGD:621105"/>
<dbReference type="CTD" id="56913"/>
<dbReference type="RGD" id="621105">
    <property type="gene designation" value="C1galt1"/>
</dbReference>
<dbReference type="VEuPathDB" id="HostDB:ENSRNOG00000007804"/>
<dbReference type="eggNOG" id="KOG2246">
    <property type="taxonomic scope" value="Eukaryota"/>
</dbReference>
<dbReference type="HOGENOM" id="CLU_035857_0_0_1"/>
<dbReference type="InParanoid" id="Q9JJ05"/>
<dbReference type="PhylomeDB" id="Q9JJ05"/>
<dbReference type="TreeFam" id="TF317293"/>
<dbReference type="BRENDA" id="2.4.1.122">
    <property type="organism ID" value="5301"/>
</dbReference>
<dbReference type="Reactome" id="R-RNO-913709">
    <property type="pathway name" value="O-linked glycosylation of mucins"/>
</dbReference>
<dbReference type="SABIO-RK" id="Q9JJ05"/>
<dbReference type="UniPathway" id="UPA00378"/>
<dbReference type="PRO" id="PR:Q9JJ05"/>
<dbReference type="Proteomes" id="UP000002494">
    <property type="component" value="Chromosome 4"/>
</dbReference>
<dbReference type="Bgee" id="ENSRNOG00000007804">
    <property type="expression patterns" value="Expressed in stomach and 19 other cell types or tissues"/>
</dbReference>
<dbReference type="ExpressionAtlas" id="Q9JJ05">
    <property type="expression patterns" value="baseline and differential"/>
</dbReference>
<dbReference type="GO" id="GO:0016020">
    <property type="term" value="C:membrane"/>
    <property type="evidence" value="ECO:0000266"/>
    <property type="project" value="RGD"/>
</dbReference>
<dbReference type="GO" id="GO:0016263">
    <property type="term" value="F:glycoprotein-N-acetylgalactosamine 3-beta-galactosyltransferase activity"/>
    <property type="evidence" value="ECO:0000266"/>
    <property type="project" value="RGD"/>
</dbReference>
<dbReference type="GO" id="GO:0046872">
    <property type="term" value="F:metal ion binding"/>
    <property type="evidence" value="ECO:0007669"/>
    <property type="project" value="UniProtKB-KW"/>
</dbReference>
<dbReference type="GO" id="GO:0000166">
    <property type="term" value="F:nucleotide binding"/>
    <property type="evidence" value="ECO:0007669"/>
    <property type="project" value="UniProtKB-KW"/>
</dbReference>
<dbReference type="GO" id="GO:0001525">
    <property type="term" value="P:angiogenesis"/>
    <property type="evidence" value="ECO:0000266"/>
    <property type="project" value="RGD"/>
</dbReference>
<dbReference type="GO" id="GO:0060576">
    <property type="term" value="P:intestinal epithelial cell development"/>
    <property type="evidence" value="ECO:0000266"/>
    <property type="project" value="RGD"/>
</dbReference>
<dbReference type="GO" id="GO:0001822">
    <property type="term" value="P:kidney development"/>
    <property type="evidence" value="ECO:0000266"/>
    <property type="project" value="RGD"/>
</dbReference>
<dbReference type="GO" id="GO:0006493">
    <property type="term" value="P:protein O-linked glycosylation"/>
    <property type="evidence" value="ECO:0000266"/>
    <property type="project" value="RGD"/>
</dbReference>
<dbReference type="FunFam" id="3.90.550.50:FF:000007">
    <property type="entry name" value="Glycoprotein-N-acetylgalactosamine 3-beta-galactosyltransferase 1"/>
    <property type="match status" value="1"/>
</dbReference>
<dbReference type="Gene3D" id="3.90.550.50">
    <property type="match status" value="1"/>
</dbReference>
<dbReference type="InterPro" id="IPR026050">
    <property type="entry name" value="C1GALT1/C1GALT1_chp1"/>
</dbReference>
<dbReference type="InterPro" id="IPR003378">
    <property type="entry name" value="Fringe-like_glycosylTrfase"/>
</dbReference>
<dbReference type="PANTHER" id="PTHR23033">
    <property type="entry name" value="BETA1,3-GALACTOSYLTRANSFERASE"/>
    <property type="match status" value="1"/>
</dbReference>
<dbReference type="PANTHER" id="PTHR23033:SF13">
    <property type="entry name" value="GLYCOPROTEIN-N-ACETYLGALACTOSAMINE 3-BETA-GALACTOSYLTRANSFERASE 1"/>
    <property type="match status" value="1"/>
</dbReference>
<dbReference type="Pfam" id="PF02434">
    <property type="entry name" value="Fringe"/>
    <property type="match status" value="1"/>
</dbReference>
<feature type="initiator methionine" description="Removed" evidence="6">
    <location>
        <position position="1"/>
    </location>
</feature>
<feature type="chain" id="PRO_0000285066" description="Glycoprotein-N-acetylgalactosamine 3-beta-galactosyltransferase 1">
    <location>
        <begin position="2"/>
        <end position="363"/>
    </location>
</feature>
<feature type="topological domain" description="Cytoplasmic" evidence="4">
    <location>
        <begin position="2"/>
        <end position="6"/>
    </location>
</feature>
<feature type="transmembrane region" description="Helical; Signal-anchor for type II membrane protein" evidence="4">
    <location>
        <begin position="7"/>
        <end position="29"/>
    </location>
</feature>
<feature type="topological domain" description="Lumenal" evidence="4">
    <location>
        <begin position="30"/>
        <end position="363"/>
    </location>
</feature>
<feature type="region of interest" description="Disordered" evidence="5">
    <location>
        <begin position="41"/>
        <end position="72"/>
    </location>
</feature>
<feature type="compositionally biased region" description="Basic and acidic residues" evidence="5">
    <location>
        <begin position="44"/>
        <end position="56"/>
    </location>
</feature>
<feature type="binding site" evidence="1">
    <location>
        <position position="94"/>
    </location>
    <ligand>
        <name>UDP</name>
        <dbReference type="ChEBI" id="CHEBI:58223"/>
    </ligand>
</feature>
<feature type="binding site" evidence="1">
    <location>
        <position position="138"/>
    </location>
    <ligand>
        <name>UDP</name>
        <dbReference type="ChEBI" id="CHEBI:58223"/>
    </ligand>
</feature>
<feature type="binding site" evidence="1">
    <location>
        <position position="139"/>
    </location>
    <ligand>
        <name>UDP</name>
        <dbReference type="ChEBI" id="CHEBI:58223"/>
    </ligand>
</feature>
<feature type="binding site" evidence="1">
    <location>
        <position position="140"/>
    </location>
    <ligand>
        <name>UDP</name>
        <dbReference type="ChEBI" id="CHEBI:58223"/>
    </ligand>
</feature>
<feature type="binding site" evidence="1">
    <location>
        <position position="146"/>
    </location>
    <ligand>
        <name>UDP</name>
        <dbReference type="ChEBI" id="CHEBI:58223"/>
    </ligand>
</feature>
<feature type="binding site" evidence="1">
    <location>
        <position position="169"/>
    </location>
    <ligand>
        <name>Mn(2+)</name>
        <dbReference type="ChEBI" id="CHEBI:29035"/>
    </ligand>
</feature>
<feature type="binding site" evidence="1">
    <location>
        <position position="169"/>
    </location>
    <ligand>
        <name>UDP</name>
        <dbReference type="ChEBI" id="CHEBI:58223"/>
    </ligand>
</feature>
<feature type="binding site" evidence="1">
    <location>
        <position position="171"/>
    </location>
    <ligand>
        <name>Mn(2+)</name>
        <dbReference type="ChEBI" id="CHEBI:29035"/>
    </ligand>
</feature>
<feature type="binding site" evidence="1">
    <location>
        <position position="285"/>
    </location>
    <ligand>
        <name>a glycoprotein</name>
        <dbReference type="ChEBI" id="CHEBI:17089"/>
    </ligand>
</feature>
<feature type="binding site" evidence="1">
    <location>
        <position position="309"/>
    </location>
    <ligand>
        <name>Mn(2+)</name>
        <dbReference type="ChEBI" id="CHEBI:29035"/>
    </ligand>
</feature>
<feature type="binding site" evidence="1">
    <location>
        <position position="309"/>
    </location>
    <ligand>
        <name>UDP</name>
        <dbReference type="ChEBI" id="CHEBI:58223"/>
    </ligand>
</feature>
<feature type="binding site" evidence="1">
    <location>
        <position position="310"/>
    </location>
    <ligand>
        <name>UDP</name>
        <dbReference type="ChEBI" id="CHEBI:58223"/>
    </ligand>
</feature>
<feature type="modified residue" description="Phosphoserine" evidence="2">
    <location>
        <position position="235"/>
    </location>
</feature>
<feature type="disulfide bond" evidence="1">
    <location>
        <begin position="91"/>
        <end position="115"/>
    </location>
</feature>
<feature type="disulfide bond" evidence="1">
    <location>
        <begin position="232"/>
        <end position="246"/>
    </location>
</feature>
<feature type="disulfide bond" evidence="1">
    <location>
        <begin position="300"/>
        <end position="301"/>
    </location>
</feature>
<keyword id="KW-0037">Angiogenesis</keyword>
<keyword id="KW-0217">Developmental protein</keyword>
<keyword id="KW-0221">Differentiation</keyword>
<keyword id="KW-0903">Direct protein sequencing</keyword>
<keyword id="KW-1015">Disulfide bond</keyword>
<keyword id="KW-0328">Glycosyltransferase</keyword>
<keyword id="KW-0464">Manganese</keyword>
<keyword id="KW-0472">Membrane</keyword>
<keyword id="KW-0479">Metal-binding</keyword>
<keyword id="KW-0547">Nucleotide-binding</keyword>
<keyword id="KW-0597">Phosphoprotein</keyword>
<keyword id="KW-1185">Reference proteome</keyword>
<keyword id="KW-0735">Signal-anchor</keyword>
<keyword id="KW-0808">Transferase</keyword>
<keyword id="KW-0812">Transmembrane</keyword>
<keyword id="KW-1133">Transmembrane helix</keyword>
<protein>
    <recommendedName>
        <fullName>Glycoprotein-N-acetylgalactosamine 3-beta-galactosyltransferase 1</fullName>
        <ecNumber evidence="3">2.4.1.122</ecNumber>
    </recommendedName>
    <alternativeName>
        <fullName>Core 1 O-glycan T-synthase</fullName>
    </alternativeName>
    <alternativeName>
        <fullName>Core 1 UDP-galactose:N-acetylgalactosamine-alpha-R beta 1,3-galactosyltransferase 1</fullName>
    </alternativeName>
    <alternativeName>
        <fullName>Core 1 beta1,3-galactosyltransferase 1</fullName>
        <shortName>C1GalT1</shortName>
        <shortName>Core 1 beta3-Gal-T1</shortName>
    </alternativeName>
</protein>
<accession>Q9JJ05</accession>
<reference key="1">
    <citation type="journal article" date="2002" name="J. Biol. Chem.">
        <title>Cloning and expression of human core 1 beta1,3-galactosyltransferase.</title>
        <authorList>
            <person name="Ju T."/>
            <person name="Brewer K."/>
            <person name="D'Souza A."/>
            <person name="Cummings R.D."/>
            <person name="Canfield W.M."/>
        </authorList>
    </citation>
    <scope>NUCLEOTIDE SEQUENCE [MRNA]</scope>
</reference>
<reference key="2">
    <citation type="journal article" date="2002" name="J. Biol. Chem.">
        <title>Purification, characterization, and subunit structure of rat core 1 Beta1,3-galactosyltransferase.</title>
        <authorList>
            <person name="Ju T."/>
            <person name="Cummings R.D."/>
            <person name="Canfield W.M."/>
        </authorList>
    </citation>
    <scope>PROTEIN SEQUENCE OF 2-21 AND 186-196</scope>
    <scope>FUNCTION</scope>
    <scope>COFACTOR</scope>
    <scope>SUBUNIT</scope>
    <scope>BIOPHYSICOCHEMICAL PROPERTIES</scope>
    <scope>SUBCELLULAR LOCATION</scope>
</reference>
<comment type="function">
    <text evidence="1 2 3 6">Glycosyltransferase that generates the core 1 O-glycan Gal-beta1-3GalNAc-alpha1-Ser/Thr (T antigen), which is a precursor for many extended O-glycans in glycoproteins (PubMed:11673471). Plays a central role in many processes, such as angiogenesis, thrombopoiesis and kidney homeostasis development (By similarity).</text>
</comment>
<comment type="catalytic activity">
    <reaction evidence="3">
        <text>an N-acetyl-alpha-D-galactosaminyl derivative + UDP-alpha-D-galactose = a beta-D-galactosyl-(1-&gt;3)-N-acetyl-alpha-D-galactosaminyl derivative + UDP + H(+)</text>
        <dbReference type="Rhea" id="RHEA:15621"/>
        <dbReference type="ChEBI" id="CHEBI:15378"/>
        <dbReference type="ChEBI" id="CHEBI:28257"/>
        <dbReference type="ChEBI" id="CHEBI:58223"/>
        <dbReference type="ChEBI" id="CHEBI:66914"/>
        <dbReference type="ChEBI" id="CHEBI:133470"/>
        <dbReference type="EC" id="2.4.1.122"/>
    </reaction>
</comment>
<comment type="catalytic activity">
    <reaction evidence="1">
        <text>a 3-O-[N-acetyl-alpha-D-galactosaminyl]-L-threonyl-[protein] + UDP-alpha-D-galactose = a 3-O-[beta-D-galactosyl-(1-&gt;3)-N-acetyl-alpha-D-galactosaminyl]-L-threonyl-[protein] + UDP + H(+)</text>
        <dbReference type="Rhea" id="RHEA:56196"/>
        <dbReference type="Rhea" id="RHEA-COMP:11689"/>
        <dbReference type="Rhea" id="RHEA-COMP:13923"/>
        <dbReference type="ChEBI" id="CHEBI:15378"/>
        <dbReference type="ChEBI" id="CHEBI:58223"/>
        <dbReference type="ChEBI" id="CHEBI:66914"/>
        <dbReference type="ChEBI" id="CHEBI:87075"/>
        <dbReference type="ChEBI" id="CHEBI:137950"/>
    </reaction>
    <physiologicalReaction direction="left-to-right" evidence="1">
        <dbReference type="Rhea" id="RHEA:56197"/>
    </physiologicalReaction>
</comment>
<comment type="catalytic activity">
    <reaction evidence="1">
        <text>a 3-O-[N-acetyl-alpha-D-galactosaminyl]-L-seryl-[protein] + UDP-alpha-D-galactose = a 3-O-[beta-D-galactosyl-(1-&gt;3)-N-acetyl-alpha-D-galactosaminyl]-L-seryl-[protein] + UDP + H(+)</text>
        <dbReference type="Rhea" id="RHEA:56200"/>
        <dbReference type="Rhea" id="RHEA-COMP:12788"/>
        <dbReference type="Rhea" id="RHEA-COMP:13922"/>
        <dbReference type="ChEBI" id="CHEBI:15378"/>
        <dbReference type="ChEBI" id="CHEBI:53604"/>
        <dbReference type="ChEBI" id="CHEBI:58223"/>
        <dbReference type="ChEBI" id="CHEBI:66914"/>
        <dbReference type="ChEBI" id="CHEBI:137949"/>
    </reaction>
    <physiologicalReaction direction="left-to-right" evidence="1">
        <dbReference type="Rhea" id="RHEA:56201"/>
    </physiologicalReaction>
</comment>
<comment type="cofactor">
    <cofactor evidence="6">
        <name>Mn(2+)</name>
        <dbReference type="ChEBI" id="CHEBI:29035"/>
    </cofactor>
</comment>
<comment type="biophysicochemical properties">
    <kinetics>
        <KM evidence="6">630 uM for UDP-Gal</KM>
        <Vmax evidence="6">206.0 umol/h/mg enzyme</Vmax>
    </kinetics>
</comment>
<comment type="pathway">
    <text evidence="3">Protein modification; protein glycosylation.</text>
</comment>
<comment type="subunit">
    <text evidence="3 6">Homodimer; disulfide-linked (PubMed:11673471). Interacts with the C1GALT1C1 chaperone; required for galactosyltransferase activity (By similarity).</text>
</comment>
<comment type="subcellular location">
    <subcellularLocation>
        <location evidence="6">Membrane</location>
        <topology evidence="7">Single-pass type II membrane protein</topology>
    </subcellularLocation>
</comment>
<comment type="similarity">
    <text evidence="7">Belongs to the glycosyltransferase 31 family. Beta3-Gal-T subfamily.</text>
</comment>
<name>C1GLT_RAT</name>
<organism>
    <name type="scientific">Rattus norvegicus</name>
    <name type="common">Rat</name>
    <dbReference type="NCBI Taxonomy" id="10116"/>
    <lineage>
        <taxon>Eukaryota</taxon>
        <taxon>Metazoa</taxon>
        <taxon>Chordata</taxon>
        <taxon>Craniata</taxon>
        <taxon>Vertebrata</taxon>
        <taxon>Euteleostomi</taxon>
        <taxon>Mammalia</taxon>
        <taxon>Eutheria</taxon>
        <taxon>Euarchontoglires</taxon>
        <taxon>Glires</taxon>
        <taxon>Rodentia</taxon>
        <taxon>Myomorpha</taxon>
        <taxon>Muroidea</taxon>
        <taxon>Muridae</taxon>
        <taxon>Murinae</taxon>
        <taxon>Rattus</taxon>
    </lineage>
</organism>
<proteinExistence type="evidence at protein level"/>